<accession>A9N7B3</accession>
<evidence type="ECO:0000255" key="1">
    <source>
        <dbReference type="HAMAP-Rule" id="MF_01061"/>
    </source>
</evidence>
<evidence type="ECO:0000256" key="2">
    <source>
        <dbReference type="SAM" id="MobiDB-lite"/>
    </source>
</evidence>
<comment type="function">
    <text evidence="1">Involved in the restart of stalled replication forks, which reloads the replicative helicase on sites other than the origin of replication. Can function in multiple replication restart pathways. Displaces ssDNA from a PriB-ssDNA complex. Probably forms a spiral filament on ssDNA.</text>
</comment>
<comment type="subunit">
    <text evidence="1">Homooligomerizes. Interacts with PriB. Component of the replication restart primosome. Primosome assembly occurs via a 'hand-off' mechanism. PriA binds to replication forks, subsequently PriB then DnaT bind; DnaT then displaces ssDNA to generate the helicase loading substrate.</text>
</comment>
<comment type="similarity">
    <text evidence="1">Belongs to the DnaT family.</text>
</comment>
<organism>
    <name type="scientific">Salmonella paratyphi B (strain ATCC BAA-1250 / SPB7)</name>
    <dbReference type="NCBI Taxonomy" id="1016998"/>
    <lineage>
        <taxon>Bacteria</taxon>
        <taxon>Pseudomonadati</taxon>
        <taxon>Pseudomonadota</taxon>
        <taxon>Gammaproteobacteria</taxon>
        <taxon>Enterobacterales</taxon>
        <taxon>Enterobacteriaceae</taxon>
        <taxon>Salmonella</taxon>
    </lineage>
</organism>
<proteinExistence type="inferred from homology"/>
<sequence length="179" mass="19506">MSSRILTSDVIGIDVLLHDHHAVLAKSTGGAVAVFANNAPAFYAVTPARMAELLALEEKLSRPGSDVALDAQFYEEPEAAPVAIPCGKFAMYPAWQPDADFQRQAALWGVALREPVTAEELAAFIAYWQAEGKVFHHIQWQQKLARSVQISRSSNGGMPQRDINSVSEPDNHIPPGFRG</sequence>
<reference key="1">
    <citation type="submission" date="2007-11" db="EMBL/GenBank/DDBJ databases">
        <authorList>
            <consortium name="The Salmonella enterica serovar Paratyphi B Genome Sequencing Project"/>
            <person name="McClelland M."/>
            <person name="Sanderson E.K."/>
            <person name="Porwollik S."/>
            <person name="Spieth J."/>
            <person name="Clifton W.S."/>
            <person name="Fulton R."/>
            <person name="Cordes M."/>
            <person name="Wollam A."/>
            <person name="Shah N."/>
            <person name="Pepin K."/>
            <person name="Bhonagiri V."/>
            <person name="Nash W."/>
            <person name="Johnson M."/>
            <person name="Thiruvilangam P."/>
            <person name="Wilson R."/>
        </authorList>
    </citation>
    <scope>NUCLEOTIDE SEQUENCE [LARGE SCALE GENOMIC DNA]</scope>
    <source>
        <strain>ATCC BAA-1250 / SPB7</strain>
    </source>
</reference>
<name>DNAT_SALPB</name>
<dbReference type="EMBL" id="CP000886">
    <property type="protein sequence ID" value="ABX70986.1"/>
    <property type="molecule type" value="Genomic_DNA"/>
</dbReference>
<dbReference type="RefSeq" id="WP_000098578.1">
    <property type="nucleotide sequence ID" value="NC_010102.1"/>
</dbReference>
<dbReference type="SMR" id="A9N7B3"/>
<dbReference type="KEGG" id="spq:SPAB_05718"/>
<dbReference type="PATRIC" id="fig|1016998.12.peg.5361"/>
<dbReference type="HOGENOM" id="CLU_1501592_0_0_6"/>
<dbReference type="BioCyc" id="SENT1016998:SPAB_RS23335-MONOMER"/>
<dbReference type="Proteomes" id="UP000008556">
    <property type="component" value="Chromosome"/>
</dbReference>
<dbReference type="GO" id="GO:1990077">
    <property type="term" value="C:primosome complex"/>
    <property type="evidence" value="ECO:0007669"/>
    <property type="project" value="UniProtKB-KW"/>
</dbReference>
<dbReference type="GO" id="GO:0006269">
    <property type="term" value="P:DNA replication, synthesis of primer"/>
    <property type="evidence" value="ECO:0007669"/>
    <property type="project" value="UniProtKB-UniRule"/>
</dbReference>
<dbReference type="Gene3D" id="1.10.8.1180">
    <property type="match status" value="1"/>
</dbReference>
<dbReference type="HAMAP" id="MF_01061">
    <property type="entry name" value="DnaT"/>
    <property type="match status" value="1"/>
</dbReference>
<dbReference type="InterPro" id="IPR020917">
    <property type="entry name" value="DnaT"/>
</dbReference>
<dbReference type="InterPro" id="IPR040480">
    <property type="entry name" value="DnaT_DNA_bind"/>
</dbReference>
<dbReference type="NCBIfam" id="NF002770">
    <property type="entry name" value="PRK02854.1"/>
    <property type="match status" value="1"/>
</dbReference>
<dbReference type="Pfam" id="PF17948">
    <property type="entry name" value="DnaT"/>
    <property type="match status" value="1"/>
</dbReference>
<keyword id="KW-0235">DNA replication</keyword>
<keyword id="KW-0238">DNA-binding</keyword>
<keyword id="KW-0639">Primosome</keyword>
<protein>
    <recommendedName>
        <fullName evidence="1">Replication restart protein DnaT</fullName>
    </recommendedName>
</protein>
<gene>
    <name evidence="1" type="primary">dnaT</name>
    <name type="ordered locus">SPAB_05718</name>
</gene>
<feature type="chain" id="PRO_1000084461" description="Replication restart protein DnaT">
    <location>
        <begin position="1"/>
        <end position="179"/>
    </location>
</feature>
<feature type="region of interest" description="Disordered" evidence="2">
    <location>
        <begin position="151"/>
        <end position="179"/>
    </location>
</feature>
<feature type="compositionally biased region" description="Polar residues" evidence="2">
    <location>
        <begin position="151"/>
        <end position="168"/>
    </location>
</feature>